<keyword id="KW-0963">Cytoplasm</keyword>
<keyword id="KW-0570">Pentose shunt</keyword>
<keyword id="KW-0704">Schiff base</keyword>
<keyword id="KW-0808">Transferase</keyword>
<protein>
    <recommendedName>
        <fullName evidence="2">Transaldolase 1</fullName>
        <ecNumber evidence="2">2.2.1.2</ecNumber>
    </recommendedName>
</protein>
<dbReference type="EC" id="2.2.1.2" evidence="2"/>
<dbReference type="EMBL" id="CP000026">
    <property type="protein sequence ID" value="AAV76045.1"/>
    <property type="molecule type" value="Genomic_DNA"/>
</dbReference>
<dbReference type="SMR" id="Q5PDM6"/>
<dbReference type="KEGG" id="spt:SPA0007"/>
<dbReference type="HOGENOM" id="CLU_047470_0_1_6"/>
<dbReference type="UniPathway" id="UPA00115">
    <property type="reaction ID" value="UER00414"/>
</dbReference>
<dbReference type="Proteomes" id="UP000008185">
    <property type="component" value="Chromosome"/>
</dbReference>
<dbReference type="GO" id="GO:0005829">
    <property type="term" value="C:cytosol"/>
    <property type="evidence" value="ECO:0007669"/>
    <property type="project" value="TreeGrafter"/>
</dbReference>
<dbReference type="GO" id="GO:0004801">
    <property type="term" value="F:transaldolase activity"/>
    <property type="evidence" value="ECO:0000250"/>
    <property type="project" value="UniProtKB"/>
</dbReference>
<dbReference type="GO" id="GO:0005975">
    <property type="term" value="P:carbohydrate metabolic process"/>
    <property type="evidence" value="ECO:0007669"/>
    <property type="project" value="InterPro"/>
</dbReference>
<dbReference type="GO" id="GO:0006098">
    <property type="term" value="P:pentose-phosphate shunt"/>
    <property type="evidence" value="ECO:0007669"/>
    <property type="project" value="UniProtKB-UniRule"/>
</dbReference>
<dbReference type="CDD" id="cd00957">
    <property type="entry name" value="Transaldolase_TalAB"/>
    <property type="match status" value="1"/>
</dbReference>
<dbReference type="FunFam" id="3.20.20.70:FF:000002">
    <property type="entry name" value="Transaldolase"/>
    <property type="match status" value="1"/>
</dbReference>
<dbReference type="Gene3D" id="3.20.20.70">
    <property type="entry name" value="Aldolase class I"/>
    <property type="match status" value="1"/>
</dbReference>
<dbReference type="HAMAP" id="MF_00492">
    <property type="entry name" value="Transaldolase_1"/>
    <property type="match status" value="1"/>
</dbReference>
<dbReference type="InterPro" id="IPR013785">
    <property type="entry name" value="Aldolase_TIM"/>
</dbReference>
<dbReference type="InterPro" id="IPR001585">
    <property type="entry name" value="TAL/FSA"/>
</dbReference>
<dbReference type="InterPro" id="IPR004730">
    <property type="entry name" value="Transaldolase_1"/>
</dbReference>
<dbReference type="InterPro" id="IPR018225">
    <property type="entry name" value="Transaldolase_AS"/>
</dbReference>
<dbReference type="NCBIfam" id="NF009001">
    <property type="entry name" value="PRK12346.1"/>
    <property type="match status" value="1"/>
</dbReference>
<dbReference type="NCBIfam" id="TIGR00874">
    <property type="entry name" value="talAB"/>
    <property type="match status" value="1"/>
</dbReference>
<dbReference type="PANTHER" id="PTHR10683">
    <property type="entry name" value="TRANSALDOLASE"/>
    <property type="match status" value="1"/>
</dbReference>
<dbReference type="PANTHER" id="PTHR10683:SF18">
    <property type="entry name" value="TRANSALDOLASE"/>
    <property type="match status" value="1"/>
</dbReference>
<dbReference type="Pfam" id="PF00923">
    <property type="entry name" value="TAL_FSA"/>
    <property type="match status" value="1"/>
</dbReference>
<dbReference type="SUPFAM" id="SSF51569">
    <property type="entry name" value="Aldolase"/>
    <property type="match status" value="1"/>
</dbReference>
<dbReference type="PROSITE" id="PS01054">
    <property type="entry name" value="TRANSALDOLASE_1"/>
    <property type="match status" value="1"/>
</dbReference>
<dbReference type="PROSITE" id="PS00958">
    <property type="entry name" value="TRANSALDOLASE_2"/>
    <property type="match status" value="1"/>
</dbReference>
<feature type="chain" id="PRO_0000230969" description="Transaldolase 1">
    <location>
        <begin position="1"/>
        <end position="317"/>
    </location>
</feature>
<feature type="active site" description="Schiff-base intermediate with substrate" evidence="2">
    <location>
        <position position="132"/>
    </location>
</feature>
<sequence length="317" mass="35171">MTDKLTSLRQFTTVVADTGDIAAMKLYQPQDATTNPSLILNAAQIPEYRKLIDDAVAWAKQQSSDRAQQVVDATDKLAVNIGLEILKLVPGRISTEVDARLSYDTEASIAKAKRIIKLYNDAGISNDRILIKLASTWQGIRAAEQLEKEGINCNLTLLFSFAQARACAEAGVYLISPFVGRILDWYKANTDKKDYAPAEDPGVVSVTEIYEYYKQHGYETVVMGASFRNVGEILELAGCDRLTIAPALLKELAESEGAIERKLSFSGEVKARPERITEAEFLWQHHQDPMAVDKLADGIRKFAVDQEKLEKMIGDLL</sequence>
<accession>Q5PDM6</accession>
<gene>
    <name evidence="2" type="primary">tal1</name>
    <name type="ordered locus">SPA0007</name>
</gene>
<comment type="function">
    <text evidence="2">Transaldolase is important for the balance of metabolites in the pentose-phosphate pathway.</text>
</comment>
<comment type="catalytic activity">
    <reaction evidence="2">
        <text>D-sedoheptulose 7-phosphate + D-glyceraldehyde 3-phosphate = D-erythrose 4-phosphate + beta-D-fructose 6-phosphate</text>
        <dbReference type="Rhea" id="RHEA:17053"/>
        <dbReference type="ChEBI" id="CHEBI:16897"/>
        <dbReference type="ChEBI" id="CHEBI:57483"/>
        <dbReference type="ChEBI" id="CHEBI:57634"/>
        <dbReference type="ChEBI" id="CHEBI:59776"/>
        <dbReference type="EC" id="2.2.1.2"/>
    </reaction>
</comment>
<comment type="pathway">
    <text evidence="2">Carbohydrate degradation; pentose phosphate pathway; D-glyceraldehyde 3-phosphate and beta-D-fructose 6-phosphate from D-ribose 5-phosphate and D-xylulose 5-phosphate (non-oxidative stage): step 2/3.</text>
</comment>
<comment type="subunit">
    <text evidence="1">Homodimer.</text>
</comment>
<comment type="subcellular location">
    <subcellularLocation>
        <location evidence="2">Cytoplasm</location>
    </subcellularLocation>
</comment>
<comment type="similarity">
    <text evidence="2">Belongs to the transaldolase family. Type 1 subfamily.</text>
</comment>
<evidence type="ECO:0000250" key="1"/>
<evidence type="ECO:0000255" key="2">
    <source>
        <dbReference type="HAMAP-Rule" id="MF_00492"/>
    </source>
</evidence>
<reference key="1">
    <citation type="journal article" date="2004" name="Nat. Genet.">
        <title>Comparison of genome degradation in Paratyphi A and Typhi, human-restricted serovars of Salmonella enterica that cause typhoid.</title>
        <authorList>
            <person name="McClelland M."/>
            <person name="Sanderson K.E."/>
            <person name="Clifton S.W."/>
            <person name="Latreille P."/>
            <person name="Porwollik S."/>
            <person name="Sabo A."/>
            <person name="Meyer R."/>
            <person name="Bieri T."/>
            <person name="Ozersky P."/>
            <person name="McLellan M."/>
            <person name="Harkins C.R."/>
            <person name="Wang C."/>
            <person name="Nguyen C."/>
            <person name="Berghoff A."/>
            <person name="Elliott G."/>
            <person name="Kohlberg S."/>
            <person name="Strong C."/>
            <person name="Du F."/>
            <person name="Carter J."/>
            <person name="Kremizki C."/>
            <person name="Layman D."/>
            <person name="Leonard S."/>
            <person name="Sun H."/>
            <person name="Fulton L."/>
            <person name="Nash W."/>
            <person name="Miner T."/>
            <person name="Minx P."/>
            <person name="Delehaunty K."/>
            <person name="Fronick C."/>
            <person name="Magrini V."/>
            <person name="Nhan M."/>
            <person name="Warren W."/>
            <person name="Florea L."/>
            <person name="Spieth J."/>
            <person name="Wilson R.K."/>
        </authorList>
    </citation>
    <scope>NUCLEOTIDE SEQUENCE [LARGE SCALE GENOMIC DNA]</scope>
    <source>
        <strain>ATCC 9150 / SARB42</strain>
    </source>
</reference>
<organism>
    <name type="scientific">Salmonella paratyphi A (strain ATCC 9150 / SARB42)</name>
    <dbReference type="NCBI Taxonomy" id="295319"/>
    <lineage>
        <taxon>Bacteria</taxon>
        <taxon>Pseudomonadati</taxon>
        <taxon>Pseudomonadota</taxon>
        <taxon>Gammaproteobacteria</taxon>
        <taxon>Enterobacterales</taxon>
        <taxon>Enterobacteriaceae</taxon>
        <taxon>Salmonella</taxon>
    </lineage>
</organism>
<name>TAL1_SALPA</name>
<proteinExistence type="inferred from homology"/>